<proteinExistence type="evidence at protein level"/>
<comment type="function">
    <text evidence="3">Involved in the biosynthesis of aromatic piperamides natural products such as piperine (1-piperoyl-piperidine), the pungent principle contributing, together with several terpenoids, to the aromatic properties of black pepper fruits, and displaying numerous pharmacological activities such as antiproliferative, antitumor, antiangiogenesis, antioxidant, antidiabetic, antiobesity, cardioprotective, antimicrobial, antiaging, and immunomodulatory effects (PubMed:33833371). Can use piperidine and benzylamine as acceptors and various CoA-esters with aliphatic and aromatic amines as CoA-donors, including piperoyl-CoA, hexanoyl-CoA and octanoyl-CoA, and, to a lower extent, benzoyl-CoA (PubMed:33833371). Mediates the conversion of piperidine to three piperine isomers in the presence of piperoyl-CoA (PubMed:33833371). Its ability to convert in vitro piperidine to hexanoylpiperidine in the presence of hexanoyl-CoA, and to octanoylpiperidine in the presence of octanoyl-CoA is not confirmed in vivo according to fruits metabolome analysis (PubMed:33833371).</text>
</comment>
<comment type="catalytic activity">
    <reaction evidence="3">
        <text>piperidine + (E,E)-piperoyl-CoA = piperine + CoA + H(+)</text>
        <dbReference type="Rhea" id="RHEA:14561"/>
        <dbReference type="ChEBI" id="CHEBI:15378"/>
        <dbReference type="ChEBI" id="CHEBI:28821"/>
        <dbReference type="ChEBI" id="CHEBI:57287"/>
        <dbReference type="ChEBI" id="CHEBI:57325"/>
        <dbReference type="ChEBI" id="CHEBI:589779"/>
        <dbReference type="EC" id="2.3.1.145"/>
    </reaction>
    <physiologicalReaction direction="left-to-right" evidence="3">
        <dbReference type="Rhea" id="RHEA:14562"/>
    </physiologicalReaction>
</comment>
<comment type="biophysicochemical properties">
    <kinetics>
        <KM evidence="3">196 uM for piperoyl-CoA</KM>
        <KM evidence="3">8.69 mM for piperidine</KM>
        <text evidence="3">kcat is 0.35 sec(-1) with piperoyl-CoA as substrate (PubMed:33833371). kcat is 0.27 sec(-1) with piperidine as substrate (PubMed:33833371).</text>
    </kinetics>
</comment>
<comment type="pathway">
    <text evidence="3">Aromatic compound metabolism.</text>
</comment>
<comment type="subunit">
    <text evidence="3 4">Monomer.</text>
</comment>
<comment type="subcellular location">
    <subcellularLocation>
        <location evidence="4">Cytoplasm</location>
    </subcellularLocation>
    <text evidence="4">Localized at residual cytoplasmic structures in special cells of the fruit perisperm.</text>
</comment>
<comment type="tissue specificity">
    <text evidence="3 4">Confined to immature fruits perisperm (PubMed:33833371, PubMed:35634755). Also detectable in roots (PubMed:33833371).</text>
</comment>
<comment type="developmental stage">
    <text evidence="3 4">Starts to accumulate in spadices between 20 and 30 days post anthesis and reaches highest levels between 40 and 75 days post anthesis.</text>
</comment>
<comment type="similarity">
    <text evidence="7">Belongs to the plant acyltransferase family.</text>
</comment>
<reference key="1">
    <citation type="journal article" date="2021" name="Commun. Biol.">
        <title>Identification and characterization of piperine synthase from black pepper, Piper nigrum L.</title>
        <authorList>
            <person name="Schnabel A."/>
            <person name="Athmer B."/>
            <person name="Manke K."/>
            <person name="Schumacher F."/>
            <person name="Cotinguiba F."/>
            <person name="Vogt T."/>
        </authorList>
    </citation>
    <scope>NUCLEOTIDE SEQUENCE [MRNA]</scope>
    <scope>FUNCTION</scope>
    <scope>CATALYTIC ACTIVITY</scope>
    <scope>TISSUE SPECIFICITY</scope>
    <scope>DEVELOPMENTAL STAGE</scope>
    <scope>BIOPHYSICOCHEMICAL PROPERTIES</scope>
    <scope>PATHWAY</scope>
    <scope>SUBUNIT</scope>
    <source>
        <tissue>Fruit</tissue>
    </source>
</reference>
<reference key="2">
    <citation type="journal article" date="2021" name="Phytother. Res.">
        <title>Piperine: A review of its biological effects.</title>
        <authorList>
            <person name="Haq I.U."/>
            <person name="Imran M."/>
            <person name="Nadeem M."/>
            <person name="Tufail T."/>
            <person name="Gondal T.A."/>
            <person name="Mubarak M.S."/>
        </authorList>
    </citation>
    <scope>REVIEW ON PIPERINE PHARMACOLOGICAL AND CULINARY USES</scope>
</reference>
<reference key="3">
    <citation type="journal article" date="2022" name="Plant J.">
        <title>The terminal enzymatic step in piperine biosynthesis is co-localized with the product piperine in specialized cells of black pepper (Piper nigrum L.).</title>
        <authorList>
            <person name="Jaeckel L."/>
            <person name="Schnabel A."/>
            <person name="Stellmach H."/>
            <person name="Klauss U."/>
            <person name="Matschi S."/>
            <person name="Hause G."/>
            <person name="Vogt T."/>
        </authorList>
    </citation>
    <scope>IDENTIFICATION BY MASS SPECTROMETRY</scope>
    <scope>SUBCELLULAR LOCATION</scope>
    <scope>TISSUE SPECIFICITY</scope>
    <scope>DEVELOPMENTAL STAGE</scope>
    <scope>SUBUNIT</scope>
    <source>
        <tissue>Fruit</tissue>
    </source>
</reference>
<accession>P0DO57</accession>
<name>PAS_PIPNI</name>
<keyword id="KW-0012">Acyltransferase</keyword>
<keyword id="KW-0963">Cytoplasm</keyword>
<keyword id="KW-0808">Transferase</keyword>
<gene>
    <name evidence="5 6" type="primary">PAS</name>
    <name evidence="5" type="synonym">BAHD1</name>
</gene>
<feature type="chain" id="PRO_0000456906" description="Piperamide synthase">
    <location>
        <begin position="1"/>
        <end position="460"/>
    </location>
</feature>
<feature type="region of interest" description="Disordered" evidence="2">
    <location>
        <begin position="1"/>
        <end position="23"/>
    </location>
</feature>
<feature type="short sequence motif" description="Microbody targeting signal" evidence="1">
    <location>
        <begin position="458"/>
        <end position="460"/>
    </location>
</feature>
<feature type="active site" description="Proton acceptor" evidence="1">
    <location>
        <position position="168"/>
    </location>
</feature>
<feature type="active site" description="Proton acceptor" evidence="1">
    <location>
        <position position="383"/>
    </location>
</feature>
<evidence type="ECO:0000255" key="1"/>
<evidence type="ECO:0000256" key="2">
    <source>
        <dbReference type="SAM" id="MobiDB-lite"/>
    </source>
</evidence>
<evidence type="ECO:0000269" key="3">
    <source>
    </source>
</evidence>
<evidence type="ECO:0000269" key="4">
    <source>
    </source>
</evidence>
<evidence type="ECO:0000303" key="5">
    <source>
    </source>
</evidence>
<evidence type="ECO:0000303" key="6">
    <source>
    </source>
</evidence>
<evidence type="ECO:0000305" key="7"/>
<evidence type="ECO:0000305" key="8">
    <source>
    </source>
</evidence>
<sequence>MASSQLEFNVERKQPELLGPAEPTPYELKELSDIDDQDGVRLFLTAIFIYPPPTKTSMPTRKTDPASDIRRGLSKAMVYYYPFAGRIREGPNRKLSVDCTGEGIVFCEADADIRLDGLGDVEVLRPPYPFIDKMTLGEGSAILGAPLVYVQVTRFACGGFIITGRFNHVMADAPGFTMFMKAAADLARGATVPMPLPVWERERYRSRVPPRVTFAHHEYMHVDDPPPRPTSEPWSLHSAFFTKADVATLRAQLPADLRKAATSFDIITACMWRCRVSALQYGPDEVVRLIVAVNSRTKFDPPLTGYYGNGLMLPAAVTEAGKLVGSDLGYAVELVREAKGKVTEEYVRSAADFLVLNGRVHFVVSNTFLVSDLRRLIDLANMDWGWGKAVSGGPVDVGENVISFLATSKNSAGEEGAVVPFCLPDSALGRFTSEVKKLVCFRPLENAAASNPDHGYMSRM</sequence>
<dbReference type="EC" id="2.3.1.-" evidence="3"/>
<dbReference type="EC" id="2.3.1.145" evidence="3"/>
<dbReference type="EMBL" id="MW354957">
    <property type="protein sequence ID" value="QUS53101.1"/>
    <property type="molecule type" value="mRNA"/>
</dbReference>
<dbReference type="SMR" id="P0DO57"/>
<dbReference type="GO" id="GO:0005737">
    <property type="term" value="C:cytoplasm"/>
    <property type="evidence" value="ECO:0007669"/>
    <property type="project" value="UniProtKB-SubCell"/>
</dbReference>
<dbReference type="GO" id="GO:0050199">
    <property type="term" value="F:piperidine N-piperoyltransferase activity"/>
    <property type="evidence" value="ECO:0000314"/>
    <property type="project" value="UniProtKB"/>
</dbReference>
<dbReference type="GO" id="GO:0160181">
    <property type="term" value="P:piperine biosynthetic process"/>
    <property type="evidence" value="ECO:0000314"/>
    <property type="project" value="UniProtKB"/>
</dbReference>
<dbReference type="Gene3D" id="3.30.559.10">
    <property type="entry name" value="Chloramphenicol acetyltransferase-like domain"/>
    <property type="match status" value="2"/>
</dbReference>
<dbReference type="InterPro" id="IPR023213">
    <property type="entry name" value="CAT-like_dom_sf"/>
</dbReference>
<dbReference type="InterPro" id="IPR050898">
    <property type="entry name" value="Plant_acyltransferase"/>
</dbReference>
<dbReference type="PANTHER" id="PTHR31147">
    <property type="entry name" value="ACYL TRANSFERASE 4"/>
    <property type="match status" value="1"/>
</dbReference>
<dbReference type="PANTHER" id="PTHR31147:SF66">
    <property type="entry name" value="OS05G0315700 PROTEIN"/>
    <property type="match status" value="1"/>
</dbReference>
<dbReference type="Pfam" id="PF02458">
    <property type="entry name" value="Transferase"/>
    <property type="match status" value="1"/>
</dbReference>
<protein>
    <recommendedName>
        <fullName evidence="5 6">Piperamide synthase</fullName>
    </recommendedName>
    <alternativeName>
        <fullName evidence="5">BAHD-type acyl transferase 1</fullName>
        <shortName evidence="5">PipBAHD1</shortName>
    </alternativeName>
    <alternativeName>
        <fullName evidence="8">Hexanoyl-CoA:piperidine piperoyl transferase</fullName>
        <ecNumber evidence="3">2.3.1.-</ecNumber>
    </alternativeName>
    <alternativeName>
        <fullName evidence="8">Octanoyl-CoA:piperidine piperoyl transferase</fullName>
        <ecNumber evidence="3">2.3.1.-</ecNumber>
    </alternativeName>
    <alternativeName>
        <fullName evidence="8">Piperoyl-CoA:piperidine piperoyl transferase</fullName>
        <shortName evidence="8">Piperidine N-piperoyltransferase</shortName>
        <ecNumber evidence="3">2.3.1.145</ecNumber>
    </alternativeName>
</protein>
<organism>
    <name type="scientific">Piper nigrum</name>
    <name type="common">Black pepper</name>
    <dbReference type="NCBI Taxonomy" id="13216"/>
    <lineage>
        <taxon>Eukaryota</taxon>
        <taxon>Viridiplantae</taxon>
        <taxon>Streptophyta</taxon>
        <taxon>Embryophyta</taxon>
        <taxon>Tracheophyta</taxon>
        <taxon>Spermatophyta</taxon>
        <taxon>Magnoliopsida</taxon>
        <taxon>Magnoliidae</taxon>
        <taxon>Piperales</taxon>
        <taxon>Piperaceae</taxon>
        <taxon>Piper</taxon>
    </lineage>
</organism>